<dbReference type="EC" id="5.3.1.23" evidence="1"/>
<dbReference type="EMBL" id="CP000141">
    <property type="protein sequence ID" value="ABB14197.1"/>
    <property type="molecule type" value="Genomic_DNA"/>
</dbReference>
<dbReference type="RefSeq" id="WP_011344463.1">
    <property type="nucleotide sequence ID" value="NC_007503.1"/>
</dbReference>
<dbReference type="SMR" id="Q3ABU6"/>
<dbReference type="FunCoup" id="Q3ABU6">
    <property type="interactions" value="368"/>
</dbReference>
<dbReference type="STRING" id="246194.CHY_1556"/>
<dbReference type="KEGG" id="chy:CHY_1556"/>
<dbReference type="eggNOG" id="COG0182">
    <property type="taxonomic scope" value="Bacteria"/>
</dbReference>
<dbReference type="HOGENOM" id="CLU_016218_1_2_9"/>
<dbReference type="InParanoid" id="Q3ABU6"/>
<dbReference type="OrthoDB" id="9803436at2"/>
<dbReference type="UniPathway" id="UPA00904">
    <property type="reaction ID" value="UER00874"/>
</dbReference>
<dbReference type="Proteomes" id="UP000002706">
    <property type="component" value="Chromosome"/>
</dbReference>
<dbReference type="GO" id="GO:0046523">
    <property type="term" value="F:S-methyl-5-thioribose-1-phosphate isomerase activity"/>
    <property type="evidence" value="ECO:0007669"/>
    <property type="project" value="UniProtKB-UniRule"/>
</dbReference>
<dbReference type="GO" id="GO:0019509">
    <property type="term" value="P:L-methionine salvage from methylthioadenosine"/>
    <property type="evidence" value="ECO:0007669"/>
    <property type="project" value="UniProtKB-UniRule"/>
</dbReference>
<dbReference type="FunFam" id="1.20.120.420:FF:000003">
    <property type="entry name" value="Methylthioribose-1-phosphate isomerase"/>
    <property type="match status" value="1"/>
</dbReference>
<dbReference type="FunFam" id="3.40.50.10470:FF:000006">
    <property type="entry name" value="Methylthioribose-1-phosphate isomerase"/>
    <property type="match status" value="1"/>
</dbReference>
<dbReference type="Gene3D" id="1.20.120.420">
    <property type="entry name" value="translation initiation factor eif-2b, domain 1"/>
    <property type="match status" value="1"/>
</dbReference>
<dbReference type="Gene3D" id="3.40.50.10470">
    <property type="entry name" value="Translation initiation factor eif-2b, domain 2"/>
    <property type="match status" value="1"/>
</dbReference>
<dbReference type="HAMAP" id="MF_01678">
    <property type="entry name" value="Salvage_MtnA"/>
    <property type="match status" value="1"/>
</dbReference>
<dbReference type="InterPro" id="IPR000649">
    <property type="entry name" value="IF-2B-related"/>
</dbReference>
<dbReference type="InterPro" id="IPR005251">
    <property type="entry name" value="IF-M1Pi"/>
</dbReference>
<dbReference type="InterPro" id="IPR042529">
    <property type="entry name" value="IF_2B-like_C"/>
</dbReference>
<dbReference type="InterPro" id="IPR011559">
    <property type="entry name" value="Initiation_fac_2B_a/b/d"/>
</dbReference>
<dbReference type="InterPro" id="IPR027363">
    <property type="entry name" value="M1Pi_N"/>
</dbReference>
<dbReference type="InterPro" id="IPR037171">
    <property type="entry name" value="NagB/RpiA_transferase-like"/>
</dbReference>
<dbReference type="NCBIfam" id="TIGR00524">
    <property type="entry name" value="eIF-2B_rel"/>
    <property type="match status" value="1"/>
</dbReference>
<dbReference type="NCBIfam" id="NF004326">
    <property type="entry name" value="PRK05720.1"/>
    <property type="match status" value="1"/>
</dbReference>
<dbReference type="NCBIfam" id="TIGR00512">
    <property type="entry name" value="salvage_mtnA"/>
    <property type="match status" value="1"/>
</dbReference>
<dbReference type="PANTHER" id="PTHR43475">
    <property type="entry name" value="METHYLTHIORIBOSE-1-PHOSPHATE ISOMERASE"/>
    <property type="match status" value="1"/>
</dbReference>
<dbReference type="PANTHER" id="PTHR43475:SF1">
    <property type="entry name" value="METHYLTHIORIBOSE-1-PHOSPHATE ISOMERASE"/>
    <property type="match status" value="1"/>
</dbReference>
<dbReference type="Pfam" id="PF01008">
    <property type="entry name" value="IF-2B"/>
    <property type="match status" value="1"/>
</dbReference>
<dbReference type="SUPFAM" id="SSF100950">
    <property type="entry name" value="NagB/RpiA/CoA transferase-like"/>
    <property type="match status" value="1"/>
</dbReference>
<comment type="function">
    <text evidence="1">Catalyzes the interconversion of methylthioribose-1-phosphate (MTR-1-P) into methylthioribulose-1-phosphate (MTRu-1-P).</text>
</comment>
<comment type="catalytic activity">
    <reaction evidence="1">
        <text>5-(methylsulfanyl)-alpha-D-ribose 1-phosphate = 5-(methylsulfanyl)-D-ribulose 1-phosphate</text>
        <dbReference type="Rhea" id="RHEA:19989"/>
        <dbReference type="ChEBI" id="CHEBI:58533"/>
        <dbReference type="ChEBI" id="CHEBI:58548"/>
        <dbReference type="EC" id="5.3.1.23"/>
    </reaction>
</comment>
<comment type="pathway">
    <text evidence="1">Amino-acid biosynthesis; L-methionine biosynthesis via salvage pathway; L-methionine from S-methyl-5-thio-alpha-D-ribose 1-phosphate: step 1/6.</text>
</comment>
<comment type="similarity">
    <text evidence="2">Belongs to the eIF-2B alpha/beta/delta subunits family. MtnA subfamily.</text>
</comment>
<accession>Q3ABU6</accession>
<proteinExistence type="inferred from homology"/>
<organism>
    <name type="scientific">Carboxydothermus hydrogenoformans (strain ATCC BAA-161 / DSM 6008 / Z-2901)</name>
    <dbReference type="NCBI Taxonomy" id="246194"/>
    <lineage>
        <taxon>Bacteria</taxon>
        <taxon>Bacillati</taxon>
        <taxon>Bacillota</taxon>
        <taxon>Clostridia</taxon>
        <taxon>Thermoanaerobacterales</taxon>
        <taxon>Thermoanaerobacteraceae</taxon>
        <taxon>Carboxydothermus</taxon>
    </lineage>
</organism>
<sequence>MDTMYWKDNTLFLLDQTKLPIEVKYVKLKTYEEVAEAIVSMKVRGAPAIGAAAAYGMVLGVMGYRNDQNLEVYLKNVYETLKNTRPTAVNLFWALDRMWKKYLEVKNQTFEEIANALLNEANSIFYEDIELNKKIGAYGLEVVPENASILTHCNAGALATAGYGTALGVVRAAFEAGKLRKVFADETRPLLQGARLTAFELLEDGIDVTLICDNMAGYVMSLGLVDLVVVGADRVTANGDVANKIGTYSLAILAKEHGIPFYVAAPYSTIDLNLTSGQDIPIEERNPDEVRKIGDRLIAPPQVKVFNPAFDVTPAKYITGIITDRGIVRPPYKENIKKLFGGK</sequence>
<feature type="chain" id="PRO_0000357158" description="Methylthioribose-1-phosphate isomerase">
    <location>
        <begin position="1"/>
        <end position="343"/>
    </location>
</feature>
<feature type="active site" description="Proton donor" evidence="1">
    <location>
        <position position="233"/>
    </location>
</feature>
<feature type="binding site" evidence="1">
    <location>
        <begin position="44"/>
        <end position="46"/>
    </location>
    <ligand>
        <name>substrate</name>
    </ligand>
</feature>
<feature type="binding site" evidence="1">
    <location>
        <position position="85"/>
    </location>
    <ligand>
        <name>substrate</name>
    </ligand>
</feature>
<feature type="binding site" evidence="1">
    <location>
        <position position="192"/>
    </location>
    <ligand>
        <name>substrate</name>
    </ligand>
</feature>
<feature type="binding site" evidence="1">
    <location>
        <begin position="243"/>
        <end position="244"/>
    </location>
    <ligand>
        <name>substrate</name>
    </ligand>
</feature>
<feature type="site" description="Transition state stabilizer" evidence="1">
    <location>
        <position position="153"/>
    </location>
</feature>
<reference key="1">
    <citation type="journal article" date="2005" name="PLoS Genet.">
        <title>Life in hot carbon monoxide: the complete genome sequence of Carboxydothermus hydrogenoformans Z-2901.</title>
        <authorList>
            <person name="Wu M."/>
            <person name="Ren Q."/>
            <person name="Durkin A.S."/>
            <person name="Daugherty S.C."/>
            <person name="Brinkac L.M."/>
            <person name="Dodson R.J."/>
            <person name="Madupu R."/>
            <person name="Sullivan S.A."/>
            <person name="Kolonay J.F."/>
            <person name="Nelson W.C."/>
            <person name="Tallon L.J."/>
            <person name="Jones K.M."/>
            <person name="Ulrich L.E."/>
            <person name="Gonzalez J.M."/>
            <person name="Zhulin I.B."/>
            <person name="Robb F.T."/>
            <person name="Eisen J.A."/>
        </authorList>
    </citation>
    <scope>NUCLEOTIDE SEQUENCE [LARGE SCALE GENOMIC DNA]</scope>
    <source>
        <strain>ATCC BAA-161 / DSM 6008 / Z-2901</strain>
    </source>
</reference>
<protein>
    <recommendedName>
        <fullName evidence="1">Methylthioribose-1-phosphate isomerase</fullName>
        <shortName evidence="1">M1Pi</shortName>
        <shortName evidence="1">MTR-1-P isomerase</shortName>
        <ecNumber evidence="1">5.3.1.23</ecNumber>
    </recommendedName>
    <alternativeName>
        <fullName evidence="1">S-methyl-5-thioribose-1-phosphate isomerase</fullName>
    </alternativeName>
</protein>
<evidence type="ECO:0000255" key="1">
    <source>
        <dbReference type="HAMAP-Rule" id="MF_01678"/>
    </source>
</evidence>
<evidence type="ECO:0000305" key="2"/>
<name>MTNA_CARHZ</name>
<gene>
    <name evidence="1" type="primary">mtnA</name>
    <name type="ordered locus">CHY_1556</name>
</gene>
<keyword id="KW-0028">Amino-acid biosynthesis</keyword>
<keyword id="KW-0413">Isomerase</keyword>
<keyword id="KW-0486">Methionine biosynthesis</keyword>
<keyword id="KW-1185">Reference proteome</keyword>